<comment type="function">
    <text evidence="6">Catalytic subunit of the UDP-N-acetylglucosamine transferase complex that operates in the biosynthetic pathway of dolichol-linked oligosaccharides, the glycan precursors employed in protein asparagine (N)-glycosylation. The assembly of dolichol-linked oligosaccharides begins on the cytosolic side of the endoplasmic reticulum membrane and finishes in its lumen. The sequential addition of sugars to dolichol pyrophosphate produces dolichol-linked oligosaccharides containing fourteen sugars, including two GlcNAcs, nine mannoses and three glucoses. Once assembled, the oligosaccharide is transferred from the lipid to nascent proteins by oligosaccharyltransferases. On the cytoplasmic face of the endoplasmic reticulum, the dimeric ALG13/ALG14 complex catalyzes the second step of dolichol pyrophosphate biosynthesis, transferring a beta1,4-linked N-acetylglucosamine (GlcNAc) from UDP-GlcNAc to GlcNAc-pyrophosphatedolichol (Gn-PDol) to produce N,N'-diacetylchitobiosyl diphosphodolichol. N,N'-diacetylchitobiosyl diphosphodolichol is a substrate for ALG1, the following enzyme in the biosynthetic pathway.</text>
</comment>
<comment type="function">
    <molecule>Isoform 2</molecule>
    <text evidence="5 13">Catalytic subunit of the UDP-N-acetylglucosamine transferase complex that operates in the biosynthetic pathway of dolichol-linked oligosaccharides, the glycan precursors employed in protein asparagine (N)-glycosylation. The assembly of dolichol-linked oligosaccharides begins on the cytosolic side of the endoplasmic reticulum membrane and finishes in its lumen. The sequential addition of sugars to dolichol pyrophosphate produces dolichol-linked oligosaccharides containing fourteen sugars, including two GlcNAcs, nine mannoses and three glucoses. Once assembled, the oligosaccharide is transferred from the lipid to nascent proteins by oligosaccharyltransferases. On the cytoplasmic face of the endoplasmic reticulum, the dimeric ALG13/ALG14 complex catalyzes the second step of dolichol pyrophosphate biosynthesis, transferring a beta1,4-linked N-acetylglucosamine (GlcNAc) from UDP-GlcNAc to GlcNAc-pyrophosphatedolichol (Gn-PDol) to produce N,N'-diacetylchitobiosyl diphosphodolichol. N,N'-diacetylchitobiosyl diphosphodolichol is a substrate for ALG1, the following enzyme in the biosynthetic pathway.</text>
</comment>
<comment type="function">
    <molecule>Isoform 1</molecule>
    <text evidence="8 13">No glycosyltransferase or deubiquitinase activity is detected for this potential multifunctional enzyme.</text>
</comment>
<comment type="catalytic activity">
    <molecule>Isoform 2</molecule>
    <reaction evidence="6 13">
        <text>an N-acetyl-alpha-D-glucosaminyl-diphospho-di-trans,poly-cis-dolichol + UDP-N-acetyl-alpha-D-glucosamine = an N,N'-diacetylchitobiosyl-diphospho-di-trans,poly-cis-dolichol + UDP + H(+)</text>
        <dbReference type="Rhea" id="RHEA:23380"/>
        <dbReference type="Rhea" id="RHEA-COMP:19507"/>
        <dbReference type="Rhea" id="RHEA-COMP:19510"/>
        <dbReference type="ChEBI" id="CHEBI:15378"/>
        <dbReference type="ChEBI" id="CHEBI:57269"/>
        <dbReference type="ChEBI" id="CHEBI:57705"/>
        <dbReference type="ChEBI" id="CHEBI:58223"/>
        <dbReference type="ChEBI" id="CHEBI:58427"/>
        <dbReference type="EC" id="2.4.1.141"/>
    </reaction>
    <physiologicalReaction direction="left-to-right" evidence="6">
        <dbReference type="Rhea" id="RHEA:23381"/>
    </physiologicalReaction>
</comment>
<comment type="biophysicochemical properties">
    <molecule>Isoform 2</molecule>
    <kinetics>
        <KM evidence="13">94.1 uM for N-acetyl-alpha-D-glucosaminyl-diphosphodolichol (at pH 7.5 and 37 degrees Celsius)</KM>
    </kinetics>
    <phDependence>
        <text evidence="13">Optimum pH is 7.0 (at 37 degrees Celsius).</text>
    </phDependence>
</comment>
<comment type="pathway">
    <molecule>Isoform 2</molecule>
    <text evidence="6 13">Protein modification; protein glycosylation.</text>
</comment>
<comment type="subunit">
    <molecule>Isoform 2</molecule>
    <text evidence="5 13">Forms with ALG14 the active heterodimeric UDP-N-acetylglucosamine transferase complex.</text>
</comment>
<comment type="subunit">
    <molecule>Isoform 1</molecule>
    <text evidence="13">Not able to interact with ALG14 to form an active UDP-N-acetylglucosamine transferase complex.</text>
</comment>
<comment type="interaction">
    <interactant intactId="EBI-947892">
        <id>Q9NP73</id>
    </interactant>
    <interactant intactId="EBI-367146">
        <id>P14672</id>
        <label>SLC2A4</label>
    </interactant>
    <organismsDiffer>false</organismsDiffer>
    <experiments>2</experiments>
</comment>
<comment type="interaction">
    <interactant intactId="EBI-10186621">
        <id>Q9NP73-4</id>
    </interactant>
    <interactant intactId="EBI-2949658">
        <id>O95429</id>
        <label>BAG4</label>
    </interactant>
    <organismsDiffer>false</organismsDiffer>
    <experiments>3</experiments>
</comment>
<comment type="interaction">
    <interactant intactId="EBI-10186621">
        <id>Q9NP73-4</id>
    </interactant>
    <interactant intactId="EBI-740785">
        <id>P49639</id>
        <label>HOXA1</label>
    </interactant>
    <organismsDiffer>false</organismsDiffer>
    <experiments>3</experiments>
</comment>
<comment type="interaction">
    <interactant intactId="EBI-10186621">
        <id>Q9NP73-4</id>
    </interactant>
    <interactant intactId="EBI-947402">
        <id>O60336</id>
        <label>MAPKBP1</label>
    </interactant>
    <organismsDiffer>false</organismsDiffer>
    <experiments>3</experiments>
</comment>
<comment type="interaction">
    <interactant intactId="EBI-10186621">
        <id>Q9NP73-4</id>
    </interactant>
    <interactant intactId="EBI-6422642">
        <id>Q01974</id>
        <label>ROR2</label>
    </interactant>
    <organismsDiffer>false</organismsDiffer>
    <experiments>3</experiments>
</comment>
<comment type="subcellular location">
    <molecule>Isoform 2</molecule>
    <subcellularLocation>
        <location evidence="5">Endoplasmic reticulum membrane</location>
        <topology evidence="5 13">Peripheral membrane protein</topology>
    </subcellularLocation>
    <text evidence="5">Recruited to the cytosolic face of the endoplasmic reticulum membrane through its interaction with ALG14.</text>
</comment>
<comment type="alternative products">
    <event type="alternative splicing"/>
    <isoform>
        <id>Q9NP73-1</id>
        <name>1</name>
        <sequence type="displayed"/>
    </isoform>
    <isoform>
        <id>Q9NP73-2</id>
        <name>2</name>
        <sequence type="described" ref="VSP_039301 VSP_039302"/>
    </isoform>
    <isoform>
        <id>Q9NP73-3</id>
        <name>3</name>
        <sequence type="described" ref="VSP_039299 VSP_039300"/>
    </isoform>
    <isoform>
        <id>Q9NP73-4</id>
        <name>4</name>
        <sequence type="described" ref="VSP_039298 VSP_039303"/>
    </isoform>
</comment>
<comment type="disease" evidence="6 7 9 10 11 13">
    <disease id="DI-03606">
        <name>Developmental and epileptic encephalopathy 36</name>
        <acronym>DEE36</acronym>
        <description>A form of epileptic encephalopathy, a heterogeneous group of severe early-onset epilepsies characterized by refractory seizures, neurodevelopmental impairment, and poor prognosis. Development is normal prior to seizure onset, after which cognitive and motor delays become apparent. Some DEE36 patients may present with an abnormal isoelectric focusing of serum transferrin, consistent with a diagnostic classification of congenital disorder of glycosylation type I. Congenital disorders of glycosylation result in a wide variety of clinical features, such as defects in the nervous system development, psychomotor retardation, dysmorphic features, hypotonia, coagulation disorders, and immunodeficiency. The broad spectrum of features reflects the critical role of N-glycoproteins during embryonic development, differentiation, and maintenance of cell functions.</description>
        <dbReference type="MIM" id="300884"/>
    </disease>
    <text>The disease is caused by variants affecting the gene represented in this entry.</text>
</comment>
<comment type="similarity">
    <text evidence="18">Belongs to the glycosyltransferase 28 family.</text>
</comment>
<comment type="caution">
    <molecule>Isoform 1</molecule>
    <text evidence="8">Contains 1 OTU domain with intact active sites. However, no deubiquitinase activity is detected in vitro with this domain compared to other isolated OTU domains.</text>
</comment>
<comment type="sequence caution" evidence="18">
    <conflict type="erroneous initiation">
        <sequence resource="EMBL-CDS" id="AAI17378"/>
    </conflict>
    <text>Truncated N-terminus.</text>
</comment>
<comment type="sequence caution" evidence="18">
    <conflict type="erroneous initiation">
        <sequence resource="EMBL-CDS" id="AAI17380"/>
    </conflict>
    <text>Truncated N-terminus.</text>
</comment>
<comment type="sequence caution" evidence="18">
    <conflict type="erroneous initiation">
        <sequence resource="EMBL-CDS" id="BAB15521"/>
    </conflict>
    <text>Truncated N-terminus.</text>
</comment>
<comment type="sequence caution" evidence="18">
    <conflict type="erroneous initiation">
        <sequence resource="EMBL-CDS" id="BAD96874"/>
    </conflict>
    <text>Truncated N-terminus.</text>
</comment>
<comment type="sequence caution" evidence="18">
    <conflict type="erroneous initiation">
        <sequence resource="EMBL-CDS" id="BAH14244"/>
    </conflict>
    <text>Truncated N-terminus.</text>
</comment>
<comment type="sequence caution" evidence="18">
    <conflict type="erroneous termination">
        <sequence resource="EMBL-CDS" id="BAH14244"/>
    </conflict>
    <text>Truncated C-terminus.</text>
</comment>
<gene>
    <name evidence="20" type="primary">ALG13</name>
    <name evidence="20" type="synonym">CXorf45</name>
    <name evidence="20" type="synonym">GLT28D1</name>
    <name type="ORF">MDS031</name>
</gene>
<accession>Q9NP73</accession>
<accession>B1AKD6</accession>
<accession>B1AKM1</accession>
<accession>B2R5L5</accession>
<accession>B7Z6J0</accession>
<accession>B7Z804</accession>
<accession>B7Z847</accession>
<accession>B7Z9A8</accession>
<accession>B7ZAJ1</accession>
<accession>B7ZB57</accession>
<accession>Q17RC3</accession>
<accession>Q5JXY9</accession>
<accession>Q9H5U8</accession>
<proteinExistence type="evidence at protein level"/>
<feature type="chain" id="PRO_0000254573" description="UDP-N-acetylglucosamine transferase subunit ALG13">
    <location>
        <begin position="1"/>
        <end position="1137"/>
    </location>
</feature>
<feature type="domain" description="OTU" evidence="2">
    <location>
        <begin position="231"/>
        <end position="352"/>
    </location>
</feature>
<feature type="domain" description="Tudor" evidence="3">
    <location>
        <begin position="492"/>
        <end position="552"/>
    </location>
</feature>
<feature type="region of interest" description="Glycosyltransferase activity">
    <location>
        <begin position="1"/>
        <end position="125"/>
    </location>
</feature>
<feature type="region of interest" description="Deubiquitinase activity">
    <location>
        <begin position="126"/>
        <end position="400"/>
    </location>
</feature>
<feature type="region of interest" description="Disordered" evidence="4">
    <location>
        <begin position="641"/>
        <end position="660"/>
    </location>
</feature>
<feature type="region of interest" description="Disordered" evidence="4">
    <location>
        <begin position="911"/>
        <end position="974"/>
    </location>
</feature>
<feature type="compositionally biased region" description="Pro residues" evidence="4">
    <location>
        <begin position="918"/>
        <end position="946"/>
    </location>
</feature>
<feature type="compositionally biased region" description="Pro residues" evidence="4">
    <location>
        <begin position="956"/>
        <end position="967"/>
    </location>
</feature>
<feature type="active site" description="For deubiquitinase activity" evidence="1">
    <location>
        <position position="239"/>
    </location>
</feature>
<feature type="active site" description="Nucleophile; for deubiquitinase activity" evidence="1">
    <location>
        <position position="242"/>
    </location>
</feature>
<feature type="active site" description="For deubiquitinase activity" evidence="1">
    <location>
        <position position="345"/>
    </location>
</feature>
<feature type="splice variant" id="VSP_039298" description="In isoform 4." evidence="14 15 17">
    <location>
        <begin position="1"/>
        <end position="104"/>
    </location>
</feature>
<feature type="splice variant" id="VSP_039299" description="In isoform 3." evidence="14">
    <location>
        <begin position="1"/>
        <end position="78"/>
    </location>
</feature>
<feature type="splice variant" id="VSP_039300" description="In isoform 3." evidence="14">
    <original>SHA</original>
    <variation>MFT</variation>
    <location>
        <begin position="79"/>
        <end position="81"/>
    </location>
</feature>
<feature type="splice variant" id="VSP_039301" description="In isoform 2." evidence="14 15 16">
    <original>RVLTCPGQAKSIASAPGKCQDSAALTSTAFSGLDFGLL</original>
    <variation>STLPGLLQSMDLSTLKCYPPGQPEKFSAFLDKVVGLQK</variation>
    <location>
        <begin position="128"/>
        <end position="165"/>
    </location>
</feature>
<feature type="splice variant" id="VSP_039302" description="In isoform 2." evidence="14 15 16">
    <location>
        <begin position="166"/>
        <end position="1137"/>
    </location>
</feature>
<feature type="splice variant" id="VSP_039303" description="In isoform 4." evidence="14 15 17">
    <location>
        <begin position="899"/>
        <end position="977"/>
    </location>
</feature>
<feature type="sequence variant" id="VAR_069218" description="In DEE36; disease features include abnormal isoelectric focusing of serum transferrin consistent with a glycosylation defect; enzyme activity at about 17% of wild-type; decreased N-acetylglucosaminyldiphosphodolichol N-acetylglucosaminyltransferase activity; dbSNP:rs867599353." evidence="6 13">
    <original>K</original>
    <variation>E</variation>
    <location>
        <position position="94"/>
    </location>
</feature>
<feature type="sequence variant" id="VAR_069412" description="In DEE36; de novo mutation detected in unrelated patients; decreased N-acetylglucosaminyldiphosphodolichol N-acetylglucosaminyltransferase activity; dbSNP:rs398122394." evidence="7 9 10 11 13">
    <original>N</original>
    <variation>S</variation>
    <location>
        <position position="107"/>
    </location>
</feature>
<feature type="sequence variant" id="VAR_089351" description="In dbSNP:rs374748006." evidence="12">
    <original>S</original>
    <variation>N</variation>
    <location>
        <position position="213"/>
    </location>
</feature>
<feature type="mutagenesis site" description="Decreased N-acetylglucosaminyldiphosphodolichol N-acetylglucosaminyltransferase activity." evidence="13">
    <original>I</original>
    <variation>N</variation>
    <location>
        <position position="17"/>
    </location>
</feature>
<feature type="mutagenesis site" description="Decreased N-acetylglucosaminyldiphosphodolichol N-acetylglucosaminyltransferase activity." evidence="13">
    <original>A</original>
    <variation>T</variation>
    <location>
        <position position="81"/>
    </location>
</feature>
<feature type="sequence conflict" description="In Ref. 1; BAH14677." evidence="18" ref="1">
    <original>Y</original>
    <variation>N</variation>
    <location>
        <position position="493"/>
    </location>
</feature>
<feature type="sequence conflict" description="In Ref. 1; BAH13276." evidence="18" ref="1">
    <original>G</original>
    <variation>D</variation>
    <location>
        <position position="564"/>
    </location>
</feature>
<feature type="sequence conflict" description="In Ref. 1; BAH14677." evidence="18" ref="1">
    <original>K</original>
    <variation>R</variation>
    <location>
        <position position="588"/>
    </location>
</feature>
<feature type="sequence conflict" description="In Ref. 1; BAH13276." evidence="18" ref="1">
    <original>D</original>
    <variation>G</variation>
    <location>
        <position position="624"/>
    </location>
</feature>
<feature type="sequence conflict" description="In Ref. 1; BAH13790." evidence="18" ref="1">
    <original>P</original>
    <variation>L</variation>
    <location>
        <position position="658"/>
    </location>
</feature>
<feature type="sequence conflict" description="In Ref. 1; BAB15521." evidence="18" ref="1">
    <original>PTL</original>
    <variation>ATF</variation>
    <location>
        <begin position="746"/>
        <end position="748"/>
    </location>
</feature>
<feature type="sequence conflict" description="In Ref. 1; BAB15521." evidence="18" ref="1">
    <original>G</original>
    <variation>E</variation>
    <location>
        <position position="752"/>
    </location>
</feature>
<feature type="sequence conflict" description="In Ref. 1; BAH14677." evidence="18" ref="1">
    <original>N</original>
    <variation>K</variation>
    <location>
        <position position="866"/>
    </location>
</feature>
<feature type="sequence conflict" description="In Ref. 1; BAH14244." evidence="18" ref="1">
    <original>P</original>
    <variation>L</variation>
    <location>
        <position position="926"/>
    </location>
</feature>
<feature type="sequence conflict" description="In Ref. 1; BAH14244." evidence="18" ref="1">
    <original>N</original>
    <variation>S</variation>
    <location>
        <position position="954"/>
    </location>
</feature>
<feature type="sequence conflict" description="In Ref. 1; BAH14244." evidence="18" ref="1">
    <original>V</original>
    <variation>A</variation>
    <location>
        <position position="1018"/>
    </location>
</feature>
<protein>
    <recommendedName>
        <fullName evidence="19">UDP-N-acetylglucosamine transferase subunit ALG13</fullName>
        <ecNumber evidence="6 13">2.4.1.141</ecNumber>
    </recommendedName>
    <alternativeName>
        <fullName evidence="20">Asparagine-linked glycosylation 13 homolog</fullName>
    </alternativeName>
    <alternativeName>
        <fullName evidence="20">Glycosyltransferase 28 domain-containing protein 1</fullName>
    </alternativeName>
</protein>
<name>ALG13_HUMAN</name>
<organism>
    <name type="scientific">Homo sapiens</name>
    <name type="common">Human</name>
    <dbReference type="NCBI Taxonomy" id="9606"/>
    <lineage>
        <taxon>Eukaryota</taxon>
        <taxon>Metazoa</taxon>
        <taxon>Chordata</taxon>
        <taxon>Craniata</taxon>
        <taxon>Vertebrata</taxon>
        <taxon>Euteleostomi</taxon>
        <taxon>Mammalia</taxon>
        <taxon>Eutheria</taxon>
        <taxon>Euarchontoglires</taxon>
        <taxon>Primates</taxon>
        <taxon>Haplorrhini</taxon>
        <taxon>Catarrhini</taxon>
        <taxon>Hominidae</taxon>
        <taxon>Homo</taxon>
    </lineage>
</organism>
<reference key="1">
    <citation type="submission" date="1999-12" db="EMBL/GenBank/DDBJ databases">
        <title>Novel genes expressed in hematopoietic stem/progenitor cells from myelodysplastic syndrome patients.</title>
        <authorList>
            <person name="Zhao M."/>
            <person name="Gu J."/>
            <person name="Li N."/>
            <person name="Peng Y."/>
            <person name="Han Z."/>
            <person name="Chen Z."/>
        </authorList>
    </citation>
    <scope>NUCLEOTIDE SEQUENCE [LARGE SCALE MRNA] (ISOFORM 2)</scope>
    <source>
        <tissue>Hematopoietic stem cell</tissue>
    </source>
</reference>
<reference key="2">
    <citation type="journal article" date="2004" name="Nat. Genet.">
        <title>Complete sequencing and characterization of 21,243 full-length human cDNAs.</title>
        <authorList>
            <person name="Ota T."/>
            <person name="Suzuki Y."/>
            <person name="Nishikawa T."/>
            <person name="Otsuki T."/>
            <person name="Sugiyama T."/>
            <person name="Irie R."/>
            <person name="Wakamatsu A."/>
            <person name="Hayashi K."/>
            <person name="Sato H."/>
            <person name="Nagai K."/>
            <person name="Kimura K."/>
            <person name="Makita H."/>
            <person name="Sekine M."/>
            <person name="Obayashi M."/>
            <person name="Nishi T."/>
            <person name="Shibahara T."/>
            <person name="Tanaka T."/>
            <person name="Ishii S."/>
            <person name="Yamamoto J."/>
            <person name="Saito K."/>
            <person name="Kawai Y."/>
            <person name="Isono Y."/>
            <person name="Nakamura Y."/>
            <person name="Nagahari K."/>
            <person name="Murakami K."/>
            <person name="Yasuda T."/>
            <person name="Iwayanagi T."/>
            <person name="Wagatsuma M."/>
            <person name="Shiratori A."/>
            <person name="Sudo H."/>
            <person name="Hosoiri T."/>
            <person name="Kaku Y."/>
            <person name="Kodaira H."/>
            <person name="Kondo H."/>
            <person name="Sugawara M."/>
            <person name="Takahashi M."/>
            <person name="Kanda K."/>
            <person name="Yokoi T."/>
            <person name="Furuya T."/>
            <person name="Kikkawa E."/>
            <person name="Omura Y."/>
            <person name="Abe K."/>
            <person name="Kamihara K."/>
            <person name="Katsuta N."/>
            <person name="Sato K."/>
            <person name="Tanikawa M."/>
            <person name="Yamazaki M."/>
            <person name="Ninomiya K."/>
            <person name="Ishibashi T."/>
            <person name="Yamashita H."/>
            <person name="Murakawa K."/>
            <person name="Fujimori K."/>
            <person name="Tanai H."/>
            <person name="Kimata M."/>
            <person name="Watanabe M."/>
            <person name="Hiraoka S."/>
            <person name="Chiba Y."/>
            <person name="Ishida S."/>
            <person name="Ono Y."/>
            <person name="Takiguchi S."/>
            <person name="Watanabe S."/>
            <person name="Yosida M."/>
            <person name="Hotuta T."/>
            <person name="Kusano J."/>
            <person name="Kanehori K."/>
            <person name="Takahashi-Fujii A."/>
            <person name="Hara H."/>
            <person name="Tanase T.-O."/>
            <person name="Nomura Y."/>
            <person name="Togiya S."/>
            <person name="Komai F."/>
            <person name="Hara R."/>
            <person name="Takeuchi K."/>
            <person name="Arita M."/>
            <person name="Imose N."/>
            <person name="Musashino K."/>
            <person name="Yuuki H."/>
            <person name="Oshima A."/>
            <person name="Sasaki N."/>
            <person name="Aotsuka S."/>
            <person name="Yoshikawa Y."/>
            <person name="Matsunawa H."/>
            <person name="Ichihara T."/>
            <person name="Shiohata N."/>
            <person name="Sano S."/>
            <person name="Moriya S."/>
            <person name="Momiyama H."/>
            <person name="Satoh N."/>
            <person name="Takami S."/>
            <person name="Terashima Y."/>
            <person name="Suzuki O."/>
            <person name="Nakagawa S."/>
            <person name="Senoh A."/>
            <person name="Mizoguchi H."/>
            <person name="Goto Y."/>
            <person name="Shimizu F."/>
            <person name="Wakebe H."/>
            <person name="Hishigaki H."/>
            <person name="Watanabe T."/>
            <person name="Sugiyama A."/>
            <person name="Takemoto M."/>
            <person name="Kawakami B."/>
            <person name="Yamazaki M."/>
            <person name="Watanabe K."/>
            <person name="Kumagai A."/>
            <person name="Itakura S."/>
            <person name="Fukuzumi Y."/>
            <person name="Fujimori Y."/>
            <person name="Komiyama M."/>
            <person name="Tashiro H."/>
            <person name="Tanigami A."/>
            <person name="Fujiwara T."/>
            <person name="Ono T."/>
            <person name="Yamada K."/>
            <person name="Fujii Y."/>
            <person name="Ozaki K."/>
            <person name="Hirao M."/>
            <person name="Ohmori Y."/>
            <person name="Kawabata A."/>
            <person name="Hikiji T."/>
            <person name="Kobatake N."/>
            <person name="Inagaki H."/>
            <person name="Ikema Y."/>
            <person name="Okamoto S."/>
            <person name="Okitani R."/>
            <person name="Kawakami T."/>
            <person name="Noguchi S."/>
            <person name="Itoh T."/>
            <person name="Shigeta K."/>
            <person name="Senba T."/>
            <person name="Matsumura K."/>
            <person name="Nakajima Y."/>
            <person name="Mizuno T."/>
            <person name="Morinaga M."/>
            <person name="Sasaki M."/>
            <person name="Togashi T."/>
            <person name="Oyama M."/>
            <person name="Hata H."/>
            <person name="Watanabe M."/>
            <person name="Komatsu T."/>
            <person name="Mizushima-Sugano J."/>
            <person name="Satoh T."/>
            <person name="Shirai Y."/>
            <person name="Takahashi Y."/>
            <person name="Nakagawa K."/>
            <person name="Okumura K."/>
            <person name="Nagase T."/>
            <person name="Nomura N."/>
            <person name="Kikuchi H."/>
            <person name="Masuho Y."/>
            <person name="Yamashita R."/>
            <person name="Nakai K."/>
            <person name="Yada T."/>
            <person name="Nakamura Y."/>
            <person name="Ohara O."/>
            <person name="Isogai T."/>
            <person name="Sugano S."/>
        </authorList>
    </citation>
    <scope>NUCLEOTIDE SEQUENCE [LARGE SCALE MRNA] (ISOFORMS 1; 2; 3 AND 4)</scope>
    <source>
        <tissue>Lung</tissue>
        <tissue>Placenta</tissue>
        <tissue>Testis</tissue>
        <tissue>Trachea</tissue>
        <tissue>Uterus</tissue>
    </source>
</reference>
<reference key="3">
    <citation type="journal article" date="2005" name="Nature">
        <title>The DNA sequence of the human X chromosome.</title>
        <authorList>
            <person name="Ross M.T."/>
            <person name="Grafham D.V."/>
            <person name="Coffey A.J."/>
            <person name="Scherer S."/>
            <person name="McLay K."/>
            <person name="Muzny D."/>
            <person name="Platzer M."/>
            <person name="Howell G.R."/>
            <person name="Burrows C."/>
            <person name="Bird C.P."/>
            <person name="Frankish A."/>
            <person name="Lovell F.L."/>
            <person name="Howe K.L."/>
            <person name="Ashurst J.L."/>
            <person name="Fulton R.S."/>
            <person name="Sudbrak R."/>
            <person name="Wen G."/>
            <person name="Jones M.C."/>
            <person name="Hurles M.E."/>
            <person name="Andrews T.D."/>
            <person name="Scott C.E."/>
            <person name="Searle S."/>
            <person name="Ramser J."/>
            <person name="Whittaker A."/>
            <person name="Deadman R."/>
            <person name="Carter N.P."/>
            <person name="Hunt S.E."/>
            <person name="Chen R."/>
            <person name="Cree A."/>
            <person name="Gunaratne P."/>
            <person name="Havlak P."/>
            <person name="Hodgson A."/>
            <person name="Metzker M.L."/>
            <person name="Richards S."/>
            <person name="Scott G."/>
            <person name="Steffen D."/>
            <person name="Sodergren E."/>
            <person name="Wheeler D.A."/>
            <person name="Worley K.C."/>
            <person name="Ainscough R."/>
            <person name="Ambrose K.D."/>
            <person name="Ansari-Lari M.A."/>
            <person name="Aradhya S."/>
            <person name="Ashwell R.I."/>
            <person name="Babbage A.K."/>
            <person name="Bagguley C.L."/>
            <person name="Ballabio A."/>
            <person name="Banerjee R."/>
            <person name="Barker G.E."/>
            <person name="Barlow K.F."/>
            <person name="Barrett I.P."/>
            <person name="Bates K.N."/>
            <person name="Beare D.M."/>
            <person name="Beasley H."/>
            <person name="Beasley O."/>
            <person name="Beck A."/>
            <person name="Bethel G."/>
            <person name="Blechschmidt K."/>
            <person name="Brady N."/>
            <person name="Bray-Allen S."/>
            <person name="Bridgeman A.M."/>
            <person name="Brown A.J."/>
            <person name="Brown M.J."/>
            <person name="Bonnin D."/>
            <person name="Bruford E.A."/>
            <person name="Buhay C."/>
            <person name="Burch P."/>
            <person name="Burford D."/>
            <person name="Burgess J."/>
            <person name="Burrill W."/>
            <person name="Burton J."/>
            <person name="Bye J.M."/>
            <person name="Carder C."/>
            <person name="Carrel L."/>
            <person name="Chako J."/>
            <person name="Chapman J.C."/>
            <person name="Chavez D."/>
            <person name="Chen E."/>
            <person name="Chen G."/>
            <person name="Chen Y."/>
            <person name="Chen Z."/>
            <person name="Chinault C."/>
            <person name="Ciccodicola A."/>
            <person name="Clark S.Y."/>
            <person name="Clarke G."/>
            <person name="Clee C.M."/>
            <person name="Clegg S."/>
            <person name="Clerc-Blankenburg K."/>
            <person name="Clifford K."/>
            <person name="Cobley V."/>
            <person name="Cole C.G."/>
            <person name="Conquer J.S."/>
            <person name="Corby N."/>
            <person name="Connor R.E."/>
            <person name="David R."/>
            <person name="Davies J."/>
            <person name="Davis C."/>
            <person name="Davis J."/>
            <person name="Delgado O."/>
            <person name="Deshazo D."/>
            <person name="Dhami P."/>
            <person name="Ding Y."/>
            <person name="Dinh H."/>
            <person name="Dodsworth S."/>
            <person name="Draper H."/>
            <person name="Dugan-Rocha S."/>
            <person name="Dunham A."/>
            <person name="Dunn M."/>
            <person name="Durbin K.J."/>
            <person name="Dutta I."/>
            <person name="Eades T."/>
            <person name="Ellwood M."/>
            <person name="Emery-Cohen A."/>
            <person name="Errington H."/>
            <person name="Evans K.L."/>
            <person name="Faulkner L."/>
            <person name="Francis F."/>
            <person name="Frankland J."/>
            <person name="Fraser A.E."/>
            <person name="Galgoczy P."/>
            <person name="Gilbert J."/>
            <person name="Gill R."/>
            <person name="Gloeckner G."/>
            <person name="Gregory S.G."/>
            <person name="Gribble S."/>
            <person name="Griffiths C."/>
            <person name="Grocock R."/>
            <person name="Gu Y."/>
            <person name="Gwilliam R."/>
            <person name="Hamilton C."/>
            <person name="Hart E.A."/>
            <person name="Hawes A."/>
            <person name="Heath P.D."/>
            <person name="Heitmann K."/>
            <person name="Hennig S."/>
            <person name="Hernandez J."/>
            <person name="Hinzmann B."/>
            <person name="Ho S."/>
            <person name="Hoffs M."/>
            <person name="Howden P.J."/>
            <person name="Huckle E.J."/>
            <person name="Hume J."/>
            <person name="Hunt P.J."/>
            <person name="Hunt A.R."/>
            <person name="Isherwood J."/>
            <person name="Jacob L."/>
            <person name="Johnson D."/>
            <person name="Jones S."/>
            <person name="de Jong P.J."/>
            <person name="Joseph S.S."/>
            <person name="Keenan S."/>
            <person name="Kelly S."/>
            <person name="Kershaw J.K."/>
            <person name="Khan Z."/>
            <person name="Kioschis P."/>
            <person name="Klages S."/>
            <person name="Knights A.J."/>
            <person name="Kosiura A."/>
            <person name="Kovar-Smith C."/>
            <person name="Laird G.K."/>
            <person name="Langford C."/>
            <person name="Lawlor S."/>
            <person name="Leversha M."/>
            <person name="Lewis L."/>
            <person name="Liu W."/>
            <person name="Lloyd C."/>
            <person name="Lloyd D.M."/>
            <person name="Loulseged H."/>
            <person name="Loveland J.E."/>
            <person name="Lovell J.D."/>
            <person name="Lozado R."/>
            <person name="Lu J."/>
            <person name="Lyne R."/>
            <person name="Ma J."/>
            <person name="Maheshwari M."/>
            <person name="Matthews L.H."/>
            <person name="McDowall J."/>
            <person name="McLaren S."/>
            <person name="McMurray A."/>
            <person name="Meidl P."/>
            <person name="Meitinger T."/>
            <person name="Milne S."/>
            <person name="Miner G."/>
            <person name="Mistry S.L."/>
            <person name="Morgan M."/>
            <person name="Morris S."/>
            <person name="Mueller I."/>
            <person name="Mullikin J.C."/>
            <person name="Nguyen N."/>
            <person name="Nordsiek G."/>
            <person name="Nyakatura G."/>
            <person name="O'dell C.N."/>
            <person name="Okwuonu G."/>
            <person name="Palmer S."/>
            <person name="Pandian R."/>
            <person name="Parker D."/>
            <person name="Parrish J."/>
            <person name="Pasternak S."/>
            <person name="Patel D."/>
            <person name="Pearce A.V."/>
            <person name="Pearson D.M."/>
            <person name="Pelan S.E."/>
            <person name="Perez L."/>
            <person name="Porter K.M."/>
            <person name="Ramsey Y."/>
            <person name="Reichwald K."/>
            <person name="Rhodes S."/>
            <person name="Ridler K.A."/>
            <person name="Schlessinger D."/>
            <person name="Schueler M.G."/>
            <person name="Sehra H.K."/>
            <person name="Shaw-Smith C."/>
            <person name="Shen H."/>
            <person name="Sheridan E.M."/>
            <person name="Shownkeen R."/>
            <person name="Skuce C.D."/>
            <person name="Smith M.L."/>
            <person name="Sotheran E.C."/>
            <person name="Steingruber H.E."/>
            <person name="Steward C.A."/>
            <person name="Storey R."/>
            <person name="Swann R.M."/>
            <person name="Swarbreck D."/>
            <person name="Tabor P.E."/>
            <person name="Taudien S."/>
            <person name="Taylor T."/>
            <person name="Teague B."/>
            <person name="Thomas K."/>
            <person name="Thorpe A."/>
            <person name="Timms K."/>
            <person name="Tracey A."/>
            <person name="Trevanion S."/>
            <person name="Tromans A.C."/>
            <person name="d'Urso M."/>
            <person name="Verduzco D."/>
            <person name="Villasana D."/>
            <person name="Waldron L."/>
            <person name="Wall M."/>
            <person name="Wang Q."/>
            <person name="Warren J."/>
            <person name="Warry G.L."/>
            <person name="Wei X."/>
            <person name="West A."/>
            <person name="Whitehead S.L."/>
            <person name="Whiteley M.N."/>
            <person name="Wilkinson J.E."/>
            <person name="Willey D.L."/>
            <person name="Williams G."/>
            <person name="Williams L."/>
            <person name="Williamson A."/>
            <person name="Williamson H."/>
            <person name="Wilming L."/>
            <person name="Woodmansey R.L."/>
            <person name="Wray P.W."/>
            <person name="Yen J."/>
            <person name="Zhang J."/>
            <person name="Zhou J."/>
            <person name="Zoghbi H."/>
            <person name="Zorilla S."/>
            <person name="Buck D."/>
            <person name="Reinhardt R."/>
            <person name="Poustka A."/>
            <person name="Rosenthal A."/>
            <person name="Lehrach H."/>
            <person name="Meindl A."/>
            <person name="Minx P.J."/>
            <person name="Hillier L.W."/>
            <person name="Willard H.F."/>
            <person name="Wilson R.K."/>
            <person name="Waterston R.H."/>
            <person name="Rice C.M."/>
            <person name="Vaudin M."/>
            <person name="Coulson A."/>
            <person name="Nelson D.L."/>
            <person name="Weinstock G."/>
            <person name="Sulston J.E."/>
            <person name="Durbin R.M."/>
            <person name="Hubbard T."/>
            <person name="Gibbs R.A."/>
            <person name="Beck S."/>
            <person name="Rogers J."/>
            <person name="Bentley D.R."/>
        </authorList>
    </citation>
    <scope>NUCLEOTIDE SEQUENCE [LARGE SCALE GENOMIC DNA]</scope>
</reference>
<reference key="4">
    <citation type="submission" date="2005-09" db="EMBL/GenBank/DDBJ databases">
        <authorList>
            <person name="Mural R.J."/>
            <person name="Istrail S."/>
            <person name="Sutton G.G."/>
            <person name="Florea L."/>
            <person name="Halpern A.L."/>
            <person name="Mobarry C.M."/>
            <person name="Lippert R."/>
            <person name="Walenz B."/>
            <person name="Shatkay H."/>
            <person name="Dew I."/>
            <person name="Miller J.R."/>
            <person name="Flanigan M.J."/>
            <person name="Edwards N.J."/>
            <person name="Bolanos R."/>
            <person name="Fasulo D."/>
            <person name="Halldorsson B.V."/>
            <person name="Hannenhalli S."/>
            <person name="Turner R."/>
            <person name="Yooseph S."/>
            <person name="Lu F."/>
            <person name="Nusskern D.R."/>
            <person name="Shue B.C."/>
            <person name="Zheng X.H."/>
            <person name="Zhong F."/>
            <person name="Delcher A.L."/>
            <person name="Huson D.H."/>
            <person name="Kravitz S.A."/>
            <person name="Mouchard L."/>
            <person name="Reinert K."/>
            <person name="Remington K.A."/>
            <person name="Clark A.G."/>
            <person name="Waterman M.S."/>
            <person name="Eichler E.E."/>
            <person name="Adams M.D."/>
            <person name="Hunkapiller M.W."/>
            <person name="Myers E.W."/>
            <person name="Venter J.C."/>
        </authorList>
    </citation>
    <scope>NUCLEOTIDE SEQUENCE [LARGE SCALE GENOMIC DNA]</scope>
</reference>
<reference key="5">
    <citation type="journal article" date="2004" name="Genome Res.">
        <title>The status, quality, and expansion of the NIH full-length cDNA project: the Mammalian Gene Collection (MGC).</title>
        <authorList>
            <consortium name="The MGC Project Team"/>
        </authorList>
    </citation>
    <scope>NUCLEOTIDE SEQUENCE [LARGE SCALE MRNA] (ISOFORM 2)</scope>
    <scope>NUCLEOTIDE SEQUENCE [LARGE SCALE MRNA] OF 592-1137 (ISOFORM 4)</scope>
    <source>
        <tissue>Colon</tissue>
        <tissue>Urinary bladder</tissue>
    </source>
</reference>
<reference key="6">
    <citation type="submission" date="2005-04" db="EMBL/GenBank/DDBJ databases">
        <authorList>
            <person name="Suzuki Y."/>
            <person name="Sugano S."/>
            <person name="Totoki Y."/>
            <person name="Toyoda A."/>
            <person name="Takeda T."/>
            <person name="Sakaki Y."/>
            <person name="Tanaka A."/>
            <person name="Yokoyama S."/>
        </authorList>
    </citation>
    <scope>NUCLEOTIDE SEQUENCE [LARGE SCALE MRNA] OF 591-1137 (ISOFORM 4)</scope>
    <source>
        <tissue>Lung</tissue>
    </source>
</reference>
<reference key="7">
    <citation type="journal article" date="2005" name="J. Biol. Chem.">
        <title>Alg14 recruits Alg13 to the cytoplasmic face of the endoplasmic reticulum to form a novel bipartite UDP-N-acetylglucosamine transferase required for the second step of N-linked glycosylation.</title>
        <authorList>
            <person name="Gao X.-D."/>
            <person name="Tachikawa H."/>
            <person name="Sato T."/>
            <person name="Jigami Y."/>
            <person name="Dean N."/>
        </authorList>
    </citation>
    <scope>FUNCTION (ISOFORM 2)</scope>
    <scope>SUBUNIT (ISOFORM 2)</scope>
    <scope>SUBCELLULAR LOCATION (ISOFORM 2)</scope>
</reference>
<reference key="8">
    <citation type="journal article" date="2011" name="BMC Syst. Biol.">
        <title>Initial characterization of the human central proteome.</title>
        <authorList>
            <person name="Burkard T.R."/>
            <person name="Planyavsky M."/>
            <person name="Kaupe I."/>
            <person name="Breitwieser F.P."/>
            <person name="Buerckstuemmer T."/>
            <person name="Bennett K.L."/>
            <person name="Superti-Furga G."/>
            <person name="Colinge J."/>
        </authorList>
    </citation>
    <scope>IDENTIFICATION BY MASS SPECTROMETRY [LARGE SCALE ANALYSIS]</scope>
</reference>
<reference key="9">
    <citation type="journal article" date="2013" name="Cell">
        <title>OTU deubiquitinases reveal mechanisms of linkage specificity and enable ubiquitin chain restriction analysis.</title>
        <authorList>
            <person name="Mevissen T.E."/>
            <person name="Hospenthal M.K."/>
            <person name="Geurink P.P."/>
            <person name="Elliott P.R."/>
            <person name="Akutsu M."/>
            <person name="Arnaudo N."/>
            <person name="Ekkebus R."/>
            <person name="Kulathu Y."/>
            <person name="Wauer T."/>
            <person name="El Oualid F."/>
            <person name="Freund S.M."/>
            <person name="Ovaa H."/>
            <person name="Komander D."/>
        </authorList>
    </citation>
    <scope>FUNCTION (ISOFORM 1)</scope>
    <scope>CAUTION (ISOFORM 1)</scope>
</reference>
<reference key="10">
    <citation type="journal article" date="2022" name="Front. Cell Dev. Biol.">
        <title>An in vitro assay for enzymatic studies on human ALG13/14 heterodimeric UDP-N-acetylglucosamine transferase.</title>
        <authorList>
            <person name="Wang C.D."/>
            <person name="Xu S."/>
            <person name="Chen S."/>
            <person name="Chen Z.H."/>
            <person name="Dean N."/>
            <person name="Wang N."/>
            <person name="Gao X.D."/>
        </authorList>
    </citation>
    <scope>FUNCTION (ISOFORMS 1 AND 2)</scope>
    <scope>CATALYTIC ACTIVITY (ISOFORM 2)</scope>
    <scope>BIOPHYSICOCHEMICAL PROPERTIES (ISOFORM 2)</scope>
    <scope>PATHWAY (ISOFORM 2)</scope>
    <scope>SUBUNIT (ISOFORMS 1 AND 2)</scope>
    <scope>TOPOLOGY (ISOFORM 2)</scope>
    <scope>CHARACTERIZATION OF VARIANT DEE36 SER-107</scope>
    <scope>MUTAGENESIS OF ILE-17; ALA-81 AND LYS-94</scope>
</reference>
<reference key="11">
    <citation type="journal article" date="2012" name="Hum. Mol. Genet.">
        <title>Gene identification in the congenital disorders of glycosylation type I by whole-exome sequencing.</title>
        <authorList>
            <person name="Timal S."/>
            <person name="Hoischen A."/>
            <person name="Lehle L."/>
            <person name="Adamowicz M."/>
            <person name="Huijben K."/>
            <person name="Sykut-Cegielska J."/>
            <person name="Paprocka J."/>
            <person name="Jamroz E."/>
            <person name="van Spronsen F.J."/>
            <person name="Korner C."/>
            <person name="Gilissen C."/>
            <person name="Rodenburg R.J."/>
            <person name="Eidhof I."/>
            <person name="Van den Heuvel L."/>
            <person name="Thiel C."/>
            <person name="Wevers R.A."/>
            <person name="Morava E."/>
            <person name="Veltman J."/>
            <person name="Lefeber D.J."/>
        </authorList>
    </citation>
    <scope>INVOLVEMENT IN DEE36</scope>
    <scope>VARIANT DEE36 GLU-94</scope>
    <scope>CHARACTERIZATION OF VARIANT DEE36 GLU-94</scope>
    <scope>FUNCTION</scope>
    <scope>CATALYTIC ACTIVITY</scope>
    <scope>PATHWAY</scope>
</reference>
<reference key="12">
    <citation type="journal article" date="2013" name="Nature">
        <title>De novo mutations in epileptic encephalopathies.</title>
        <authorList>
            <consortium name="Epi4K Consortium"/>
            <consortium name="Epilepsy Phenome/Genome Project"/>
            <person name="Allen A.S."/>
            <person name="Berkovic S.F."/>
            <person name="Cossette P."/>
            <person name="Delanty N."/>
            <person name="Dlugos D."/>
            <person name="Eichler E.E."/>
            <person name="Epstein M.P."/>
            <person name="Glauser T."/>
            <person name="Goldstein D.B."/>
            <person name="Han Y."/>
            <person name="Heinzen E.L."/>
            <person name="Hitomi Y."/>
            <person name="Howell K.B."/>
            <person name="Johnson M.R."/>
            <person name="Kuzniecky R."/>
            <person name="Lowenstein D.H."/>
            <person name="Lu Y.F."/>
            <person name="Madou M.R."/>
            <person name="Marson A.G."/>
            <person name="Mefford H.C."/>
            <person name="Esmaeeli Nieh S."/>
            <person name="O'Brien T.J."/>
            <person name="Ottman R."/>
            <person name="Petrovski S."/>
            <person name="Poduri A."/>
            <person name="Ruzzo E.K."/>
            <person name="Scheffer I.E."/>
            <person name="Sherr E.H."/>
            <person name="Yuskaitis C.J."/>
            <person name="Abou-Khalil B."/>
            <person name="Alldredge B.K."/>
            <person name="Bautista J.F."/>
            <person name="Berkovic S.F."/>
            <person name="Boro A."/>
            <person name="Cascino G.D."/>
            <person name="Consalvo D."/>
            <person name="Crumrine P."/>
            <person name="Devinsky O."/>
            <person name="Dlugos D."/>
            <person name="Epstein M.P."/>
            <person name="Fiol M."/>
            <person name="Fountain N.B."/>
            <person name="French J."/>
            <person name="Friedman D."/>
            <person name="Geller E.B."/>
            <person name="Glauser T."/>
            <person name="Glynn S."/>
            <person name="Haut S.R."/>
            <person name="Hayward J."/>
            <person name="Helmers S.L."/>
            <person name="Joshi S."/>
            <person name="Kanner A."/>
            <person name="Kirsch H.E."/>
            <person name="Knowlton R.C."/>
            <person name="Kossoff E.H."/>
            <person name="Kuperman R."/>
            <person name="Kuzniecky R."/>
            <person name="Lowenstein D.H."/>
            <person name="McGuire S.M."/>
            <person name="Motika P.V."/>
            <person name="Novotny E.J."/>
            <person name="Ottman R."/>
            <person name="Paolicchi J.M."/>
            <person name="Parent J.M."/>
            <person name="Park K."/>
            <person name="Poduri A."/>
            <person name="Scheffer I.E."/>
            <person name="Shellhaas R.A."/>
            <person name="Sherr E.H."/>
            <person name="Shih J.J."/>
            <person name="Singh R."/>
            <person name="Sirven J."/>
            <person name="Smith M.C."/>
            <person name="Sullivan J."/>
            <person name="Lin Thio L."/>
            <person name="Venkat A."/>
            <person name="Vining E.P."/>
            <person name="Von Allmen G.K."/>
            <person name="Weisenberg J.L."/>
            <person name="Widdess-Walsh P."/>
            <person name="Winawer M.R."/>
        </authorList>
    </citation>
    <scope>INVOLVEMENT IN DEE36</scope>
    <scope>VARIANT DEE36 SER-107</scope>
</reference>
<reference key="13">
    <citation type="journal article" date="2016" name="Clin. Genet.">
        <title>Whole-exome sequencing improves the diagnosis yield in sporadic infantile spasm syndrome.</title>
        <authorList>
            <person name="Dimassi S."/>
            <person name="Labalme A."/>
            <person name="Ville D."/>
            <person name="Calender A."/>
            <person name="Mignot C."/>
            <person name="Boutry-Kryza N."/>
            <person name="de Bellescize J."/>
            <person name="Rivier-Ringenbach C."/>
            <person name="Bourel-Ponchel E."/>
            <person name="Cheillan D."/>
            <person name="Simonet T."/>
            <person name="Maincent K."/>
            <person name="Rossi M."/>
            <person name="Till M."/>
            <person name="Mougou-Zerelli S."/>
            <person name="Edery P."/>
            <person name="Saad A."/>
            <person name="Heron D."/>
            <person name="des Portes V."/>
            <person name="Sanlaville D."/>
            <person name="Lesca G."/>
        </authorList>
    </citation>
    <scope>INVOLVEMENT IN DEE36</scope>
    <scope>VARIANT DEE36 SER-107</scope>
</reference>
<reference key="14">
    <citation type="journal article" date="2012" name="N. Engl. J. Med.">
        <title>Diagnostic exome sequencing in persons with severe intellectual disability.</title>
        <authorList>
            <person name="de Ligt J."/>
            <person name="Willemsen M.H."/>
            <person name="van Bon B.W."/>
            <person name="Kleefstra T."/>
            <person name="Yntema H.G."/>
            <person name="Kroes T."/>
            <person name="Vulto-van Silfhout A.T."/>
            <person name="Koolen D.A."/>
            <person name="de Vries P."/>
            <person name="Gilissen C."/>
            <person name="del Rosario M."/>
            <person name="Hoischen A."/>
            <person name="Scheffer H."/>
            <person name="de Vries B.B."/>
            <person name="Brunner H.G."/>
            <person name="Veltman J.A."/>
            <person name="Vissers L.E."/>
        </authorList>
    </citation>
    <scope>VARIANT DEE36 SER-107</scope>
</reference>
<reference key="15">
    <citation type="journal article" date="2016" name="Am. J. Hum. Genet.">
        <title>De novo mutations in SLC1A2 and CACNA1A are important causes of epileptic encephalopathies.</title>
        <authorList>
            <consortium name="Epi4K Consortium"/>
        </authorList>
    </citation>
    <scope>VARIANT DEE36 SER-107</scope>
</reference>
<reference key="16">
    <citation type="journal article" date="2020" name="Nucleic Acids Res.">
        <title>A missense mutation in the CSTF2 gene that impairs the function of the RNA recognition motif and causes defects in 3' end processing is associated with intellectual disability in humans.</title>
        <authorList>
            <person name="Grozdanov P.N."/>
            <person name="Masoumzadeh E."/>
            <person name="Kalscheuer V.M."/>
            <person name="Bienvenu T."/>
            <person name="Billuart P."/>
            <person name="Delrue M.A."/>
            <person name="Latham M.P."/>
            <person name="MacDonald C.C."/>
        </authorList>
    </citation>
    <scope>VARIANT ASN-213</scope>
</reference>
<evidence type="ECO:0000250" key="1"/>
<evidence type="ECO:0000255" key="2">
    <source>
        <dbReference type="PROSITE-ProRule" id="PRU00139"/>
    </source>
</evidence>
<evidence type="ECO:0000255" key="3">
    <source>
        <dbReference type="PROSITE-ProRule" id="PRU00211"/>
    </source>
</evidence>
<evidence type="ECO:0000256" key="4">
    <source>
        <dbReference type="SAM" id="MobiDB-lite"/>
    </source>
</evidence>
<evidence type="ECO:0000269" key="5">
    <source>
    </source>
</evidence>
<evidence type="ECO:0000269" key="6">
    <source>
    </source>
</evidence>
<evidence type="ECO:0000269" key="7">
    <source>
    </source>
</evidence>
<evidence type="ECO:0000269" key="8">
    <source>
    </source>
</evidence>
<evidence type="ECO:0000269" key="9">
    <source>
    </source>
</evidence>
<evidence type="ECO:0000269" key="10">
    <source>
    </source>
</evidence>
<evidence type="ECO:0000269" key="11">
    <source>
    </source>
</evidence>
<evidence type="ECO:0000269" key="12">
    <source>
    </source>
</evidence>
<evidence type="ECO:0000269" key="13">
    <source>
    </source>
</evidence>
<evidence type="ECO:0000303" key="14">
    <source>
    </source>
</evidence>
<evidence type="ECO:0000303" key="15">
    <source>
    </source>
</evidence>
<evidence type="ECO:0000303" key="16">
    <source ref="1"/>
</evidence>
<evidence type="ECO:0000303" key="17">
    <source ref="6"/>
</evidence>
<evidence type="ECO:0000305" key="18"/>
<evidence type="ECO:0000305" key="19">
    <source>
    </source>
</evidence>
<evidence type="ECO:0000312" key="20">
    <source>
        <dbReference type="HGNC" id="HGNC:30881"/>
    </source>
</evidence>
<keyword id="KW-0025">Alternative splicing</keyword>
<keyword id="KW-0900">Congenital disorder of glycosylation</keyword>
<keyword id="KW-0225">Disease variant</keyword>
<keyword id="KW-0256">Endoplasmic reticulum</keyword>
<keyword id="KW-0887">Epilepsy</keyword>
<keyword id="KW-0328">Glycosyltransferase</keyword>
<keyword id="KW-0378">Hydrolase</keyword>
<keyword id="KW-0472">Membrane</keyword>
<keyword id="KW-0511">Multifunctional enzyme</keyword>
<keyword id="KW-0645">Protease</keyword>
<keyword id="KW-1267">Proteomics identification</keyword>
<keyword id="KW-1185">Reference proteome</keyword>
<keyword id="KW-0788">Thiol protease</keyword>
<keyword id="KW-0808">Transferase</keyword>
<keyword id="KW-0833">Ubl conjugation pathway</keyword>
<dbReference type="EC" id="2.4.1.141" evidence="6 13"/>
<dbReference type="EMBL" id="AF220051">
    <property type="protein sequence ID" value="AAF67644.1"/>
    <property type="molecule type" value="mRNA"/>
</dbReference>
<dbReference type="EMBL" id="AK026671">
    <property type="protein sequence ID" value="BAB15521.1"/>
    <property type="status" value="ALT_INIT"/>
    <property type="molecule type" value="mRNA"/>
</dbReference>
<dbReference type="EMBL" id="AK300394">
    <property type="protein sequence ID" value="BAH13276.1"/>
    <property type="molecule type" value="mRNA"/>
</dbReference>
<dbReference type="EMBL" id="AK302729">
    <property type="protein sequence ID" value="BAH13790.1"/>
    <property type="molecule type" value="mRNA"/>
</dbReference>
<dbReference type="EMBL" id="AK302890">
    <property type="protein sequence ID" value="BAH13833.1"/>
    <property type="molecule type" value="mRNA"/>
</dbReference>
<dbReference type="EMBL" id="AK304712">
    <property type="protein sequence ID" value="BAH14244.1"/>
    <property type="status" value="ALT_SEQ"/>
    <property type="molecule type" value="mRNA"/>
</dbReference>
<dbReference type="EMBL" id="AK316306">
    <property type="protein sequence ID" value="BAH14677.1"/>
    <property type="molecule type" value="mRNA"/>
</dbReference>
<dbReference type="EMBL" id="AK316522">
    <property type="protein sequence ID" value="BAH14893.1"/>
    <property type="molecule type" value="mRNA"/>
</dbReference>
<dbReference type="EMBL" id="AK312229">
    <property type="protein sequence ID" value="BAG35162.1"/>
    <property type="molecule type" value="mRNA"/>
</dbReference>
<dbReference type="EMBL" id="AL049563">
    <property type="status" value="NOT_ANNOTATED_CDS"/>
    <property type="molecule type" value="Genomic_DNA"/>
</dbReference>
<dbReference type="EMBL" id="AL096764">
    <property type="status" value="NOT_ANNOTATED_CDS"/>
    <property type="molecule type" value="Genomic_DNA"/>
</dbReference>
<dbReference type="EMBL" id="CH471120">
    <property type="protein sequence ID" value="EAX02635.1"/>
    <property type="molecule type" value="Genomic_DNA"/>
</dbReference>
<dbReference type="EMBL" id="BC005336">
    <property type="protein sequence ID" value="AAH05336.1"/>
    <property type="molecule type" value="mRNA"/>
</dbReference>
<dbReference type="EMBL" id="BC117377">
    <property type="protein sequence ID" value="AAI17378.1"/>
    <property type="status" value="ALT_INIT"/>
    <property type="molecule type" value="mRNA"/>
</dbReference>
<dbReference type="EMBL" id="BC117379">
    <property type="protein sequence ID" value="AAI17380.1"/>
    <property type="status" value="ALT_INIT"/>
    <property type="molecule type" value="mRNA"/>
</dbReference>
<dbReference type="EMBL" id="AK223154">
    <property type="protein sequence ID" value="BAD96874.1"/>
    <property type="status" value="ALT_INIT"/>
    <property type="molecule type" value="mRNA"/>
</dbReference>
<dbReference type="CCDS" id="CCDS14559.1">
    <molecule id="Q9NP73-2"/>
</dbReference>
<dbReference type="CCDS" id="CCDS55477.1">
    <molecule id="Q9NP73-1"/>
</dbReference>
<dbReference type="CCDS" id="CCDS59173.1">
    <molecule id="Q9NP73-4"/>
</dbReference>
<dbReference type="RefSeq" id="NP_001034299.3">
    <property type="nucleotide sequence ID" value="NM_001039210.4"/>
</dbReference>
<dbReference type="RefSeq" id="NP_001093392.1">
    <molecule id="Q9NP73-1"/>
    <property type="nucleotide sequence ID" value="NM_001099922.3"/>
</dbReference>
<dbReference type="RefSeq" id="NP_001161857.1">
    <property type="nucleotide sequence ID" value="NM_001168385.2"/>
</dbReference>
<dbReference type="RefSeq" id="NP_001244159.1">
    <molecule id="Q9NP73-4"/>
    <property type="nucleotide sequence ID" value="NM_001257230.2"/>
</dbReference>
<dbReference type="RefSeq" id="NP_001244160.1">
    <molecule id="Q9NP73-3"/>
    <property type="nucleotide sequence ID" value="NM_001257231.2"/>
</dbReference>
<dbReference type="RefSeq" id="NP_001244163.1">
    <molecule id="Q9NP73-4"/>
    <property type="nucleotide sequence ID" value="NM_001257234.2"/>
</dbReference>
<dbReference type="RefSeq" id="NP_001244166.1">
    <molecule id="Q9NP73-4"/>
    <property type="nucleotide sequence ID" value="NM_001257237.2"/>
</dbReference>
<dbReference type="RefSeq" id="NP_001244170.1">
    <property type="nucleotide sequence ID" value="NM_001257241.2"/>
</dbReference>
<dbReference type="RefSeq" id="NP_060936.1">
    <molecule id="Q9NP73-2"/>
    <property type="nucleotide sequence ID" value="NM_018466.6"/>
</dbReference>
<dbReference type="SMR" id="Q9NP73"/>
<dbReference type="BioGRID" id="122956">
    <property type="interactions" value="188"/>
</dbReference>
<dbReference type="FunCoup" id="Q9NP73">
    <property type="interactions" value="874"/>
</dbReference>
<dbReference type="IntAct" id="Q9NP73">
    <property type="interactions" value="33"/>
</dbReference>
<dbReference type="MINT" id="Q9NP73"/>
<dbReference type="STRING" id="9606.ENSP00000378260"/>
<dbReference type="CAZy" id="GT1">
    <property type="family name" value="Glycosyltransferase Family 1"/>
</dbReference>
<dbReference type="MEROPS" id="C85.005"/>
<dbReference type="GlyGen" id="Q9NP73">
    <property type="glycosylation" value="3 sites, 1 O-linked glycan (1 site)"/>
</dbReference>
<dbReference type="iPTMnet" id="Q9NP73"/>
<dbReference type="MetOSite" id="Q9NP73"/>
<dbReference type="PhosphoSitePlus" id="Q9NP73"/>
<dbReference type="SwissPalm" id="Q9NP73"/>
<dbReference type="BioMuta" id="ALG13"/>
<dbReference type="DMDM" id="298286785"/>
<dbReference type="jPOST" id="Q9NP73"/>
<dbReference type="MassIVE" id="Q9NP73"/>
<dbReference type="PaxDb" id="9606-ENSP00000378260"/>
<dbReference type="PeptideAtlas" id="Q9NP73"/>
<dbReference type="ProteomicsDB" id="81908">
    <molecule id="Q9NP73-1"/>
</dbReference>
<dbReference type="ProteomicsDB" id="81909">
    <molecule id="Q9NP73-2"/>
</dbReference>
<dbReference type="ProteomicsDB" id="81910">
    <molecule id="Q9NP73-3"/>
</dbReference>
<dbReference type="ProteomicsDB" id="81911">
    <molecule id="Q9NP73-4"/>
</dbReference>
<dbReference type="Pumba" id="Q9NP73"/>
<dbReference type="ABCD" id="Q9NP73">
    <property type="antibodies" value="1 sequenced antibody"/>
</dbReference>
<dbReference type="Antibodypedia" id="490">
    <property type="antibodies" value="163 antibodies from 21 providers"/>
</dbReference>
<dbReference type="DNASU" id="79868"/>
<dbReference type="Ensembl" id="ENST00000371979.7">
    <molecule id="Q9NP73-2"/>
    <property type="protein sequence ID" value="ENSP00000361047.3"/>
    <property type="gene ID" value="ENSG00000101901.13"/>
</dbReference>
<dbReference type="Ensembl" id="ENST00000394780.8">
    <molecule id="Q9NP73-1"/>
    <property type="protein sequence ID" value="ENSP00000378260.3"/>
    <property type="gene ID" value="ENSG00000101901.13"/>
</dbReference>
<dbReference type="Ensembl" id="ENST00000436609.5">
    <molecule id="Q9NP73-4"/>
    <property type="protein sequence ID" value="ENSP00000392990.2"/>
    <property type="gene ID" value="ENSG00000101901.13"/>
</dbReference>
<dbReference type="GeneID" id="79868"/>
<dbReference type="KEGG" id="hsa:79868"/>
<dbReference type="MANE-Select" id="ENST00000394780.8">
    <property type="protein sequence ID" value="ENSP00000378260.3"/>
    <property type="RefSeq nucleotide sequence ID" value="NM_001099922.3"/>
    <property type="RefSeq protein sequence ID" value="NP_001093392.1"/>
</dbReference>
<dbReference type="UCSC" id="uc004epi.3">
    <molecule id="Q9NP73-1"/>
    <property type="organism name" value="human"/>
</dbReference>
<dbReference type="AGR" id="HGNC:30881"/>
<dbReference type="CTD" id="79868"/>
<dbReference type="DisGeNET" id="79868"/>
<dbReference type="GeneCards" id="ALG13"/>
<dbReference type="GeneReviews" id="ALG13"/>
<dbReference type="HGNC" id="HGNC:30881">
    <property type="gene designation" value="ALG13"/>
</dbReference>
<dbReference type="HPA" id="ENSG00000101901">
    <property type="expression patterns" value="Low tissue specificity"/>
</dbReference>
<dbReference type="MalaCards" id="ALG13"/>
<dbReference type="MIM" id="300776">
    <property type="type" value="gene"/>
</dbReference>
<dbReference type="MIM" id="300884">
    <property type="type" value="phenotype"/>
</dbReference>
<dbReference type="neXtProt" id="NX_Q9NP73"/>
<dbReference type="OpenTargets" id="ENSG00000101901"/>
<dbReference type="Orphanet" id="324422">
    <property type="disease" value="ALG13-CDG"/>
</dbReference>
<dbReference type="Orphanet" id="777">
    <property type="disease" value="X-linked non-syndromic intellectual disability"/>
</dbReference>
<dbReference type="PharmGKB" id="PA162376235"/>
<dbReference type="VEuPathDB" id="HostDB:ENSG00000101901"/>
<dbReference type="eggNOG" id="KOG2605">
    <property type="taxonomic scope" value="Eukaryota"/>
</dbReference>
<dbReference type="eggNOG" id="KOG3349">
    <property type="taxonomic scope" value="Eukaryota"/>
</dbReference>
<dbReference type="GeneTree" id="ENSGT00940000159922"/>
<dbReference type="HOGENOM" id="CLU_009906_0_0_1"/>
<dbReference type="InParanoid" id="Q9NP73"/>
<dbReference type="OMA" id="QYKFRPN"/>
<dbReference type="OrthoDB" id="20273at2759"/>
<dbReference type="PAN-GO" id="Q9NP73">
    <property type="GO annotations" value="0 GO annotations based on evolutionary models"/>
</dbReference>
<dbReference type="PhylomeDB" id="Q9NP73"/>
<dbReference type="TreeFam" id="TF332789"/>
<dbReference type="PathwayCommons" id="Q9NP73"/>
<dbReference type="Reactome" id="R-HSA-446193">
    <property type="pathway name" value="Biosynthesis of the N-glycan precursor (dolichol lipid-linked oligosaccharide, LLO) and transfer to a nascent protein"/>
</dbReference>
<dbReference type="Reactome" id="R-HSA-5633231">
    <property type="pathway name" value="Defective ALG14 causes ALG14-CMS"/>
</dbReference>
<dbReference type="SignaLink" id="Q9NP73"/>
<dbReference type="UniPathway" id="UPA00378"/>
<dbReference type="BioGRID-ORCS" id="79868">
    <property type="hits" value="248 hits in 806 CRISPR screens"/>
</dbReference>
<dbReference type="CD-CODE" id="232F8A39">
    <property type="entry name" value="P-body"/>
</dbReference>
<dbReference type="CD-CODE" id="DEE660B4">
    <property type="entry name" value="Stress granule"/>
</dbReference>
<dbReference type="ChiTaRS" id="ALG13">
    <property type="organism name" value="human"/>
</dbReference>
<dbReference type="GeneWiki" id="ALG13"/>
<dbReference type="GenomeRNAi" id="79868"/>
<dbReference type="Pharos" id="Q9NP73">
    <property type="development level" value="Tbio"/>
</dbReference>
<dbReference type="PRO" id="PR:Q9NP73"/>
<dbReference type="Proteomes" id="UP000005640">
    <property type="component" value="Chromosome X"/>
</dbReference>
<dbReference type="RNAct" id="Q9NP73">
    <property type="molecule type" value="protein"/>
</dbReference>
<dbReference type="Bgee" id="ENSG00000101901">
    <property type="expression patterns" value="Expressed in calcaneal tendon and 197 other cell types or tissues"/>
</dbReference>
<dbReference type="ExpressionAtlas" id="Q9NP73">
    <property type="expression patterns" value="baseline and differential"/>
</dbReference>
<dbReference type="GO" id="GO:0098554">
    <property type="term" value="C:cytoplasmic side of endoplasmic reticulum membrane"/>
    <property type="evidence" value="ECO:0000316"/>
    <property type="project" value="UniProtKB"/>
</dbReference>
<dbReference type="GO" id="GO:0005789">
    <property type="term" value="C:endoplasmic reticulum membrane"/>
    <property type="evidence" value="ECO:0000304"/>
    <property type="project" value="Reactome"/>
</dbReference>
<dbReference type="GO" id="GO:0043541">
    <property type="term" value="C:UDP-N-acetylglucosamine transferase complex"/>
    <property type="evidence" value="ECO:0000314"/>
    <property type="project" value="UniProtKB"/>
</dbReference>
<dbReference type="GO" id="GO:0004843">
    <property type="term" value="F:cysteine-type deubiquitinase activity"/>
    <property type="evidence" value="ECO:0007669"/>
    <property type="project" value="UniProtKB-EC"/>
</dbReference>
<dbReference type="GO" id="GO:0004577">
    <property type="term" value="F:N-acetylglucosaminyldiphosphodolichol N-acetylglucosaminyltransferase activity"/>
    <property type="evidence" value="ECO:0000314"/>
    <property type="project" value="UniProtKB"/>
</dbReference>
<dbReference type="GO" id="GO:0006488">
    <property type="term" value="P:dolichol-linked oligosaccharide biosynthetic process"/>
    <property type="evidence" value="ECO:0000315"/>
    <property type="project" value="UniProtKB"/>
</dbReference>
<dbReference type="GO" id="GO:0006487">
    <property type="term" value="P:protein N-linked glycosylation"/>
    <property type="evidence" value="ECO:0000315"/>
    <property type="project" value="UniProtKB"/>
</dbReference>
<dbReference type="GO" id="GO:0006508">
    <property type="term" value="P:proteolysis"/>
    <property type="evidence" value="ECO:0007669"/>
    <property type="project" value="UniProtKB-KW"/>
</dbReference>
<dbReference type="CDD" id="cd22795">
    <property type="entry name" value="OTU_ALG13"/>
    <property type="match status" value="1"/>
</dbReference>
<dbReference type="CDD" id="cd20447">
    <property type="entry name" value="Tudor_TDRD13"/>
    <property type="match status" value="1"/>
</dbReference>
<dbReference type="FunFam" id="3.90.70.80:FF:000015">
    <property type="entry name" value="Putative bifunctional UDP-N-acetylglucosamine transferase and deubiquitinase ALG13"/>
    <property type="match status" value="1"/>
</dbReference>
<dbReference type="FunFam" id="3.40.50.2000:FF:000147">
    <property type="entry name" value="UDP-N-acetylglucosamine transferase subunit ALG13-like protein"/>
    <property type="match status" value="1"/>
</dbReference>
<dbReference type="Gene3D" id="3.90.70.80">
    <property type="match status" value="1"/>
</dbReference>
<dbReference type="Gene3D" id="3.40.50.2000">
    <property type="entry name" value="Glycogen Phosphorylase B"/>
    <property type="match status" value="1"/>
</dbReference>
<dbReference type="InterPro" id="IPR039042">
    <property type="entry name" value="Alg13-like"/>
</dbReference>
<dbReference type="InterPro" id="IPR007235">
    <property type="entry name" value="Glyco_trans_28_C"/>
</dbReference>
<dbReference type="InterPro" id="IPR047387">
    <property type="entry name" value="OTU_ALG13"/>
</dbReference>
<dbReference type="InterPro" id="IPR003323">
    <property type="entry name" value="OTU_dom"/>
</dbReference>
<dbReference type="InterPro" id="IPR038765">
    <property type="entry name" value="Papain-like_cys_pep_sf"/>
</dbReference>
<dbReference type="InterPro" id="IPR002999">
    <property type="entry name" value="Tudor"/>
</dbReference>
<dbReference type="PANTHER" id="PTHR12867:SF7">
    <property type="entry name" value="BIFUNCTIONAL UDP-N-ACETYLGLUCOSAMINE TRANSFERASE AND DEUBIQUITINASE ALG13-RELATED"/>
    <property type="match status" value="1"/>
</dbReference>
<dbReference type="PANTHER" id="PTHR12867">
    <property type="entry name" value="GLYCOSYL TRANSFERASE-RELATED"/>
    <property type="match status" value="1"/>
</dbReference>
<dbReference type="Pfam" id="PF04101">
    <property type="entry name" value="Glyco_tran_28_C"/>
    <property type="match status" value="1"/>
</dbReference>
<dbReference type="Pfam" id="PF02338">
    <property type="entry name" value="OTU"/>
    <property type="match status" value="1"/>
</dbReference>
<dbReference type="SUPFAM" id="SSF54001">
    <property type="entry name" value="Cysteine proteinases"/>
    <property type="match status" value="1"/>
</dbReference>
<dbReference type="SUPFAM" id="SSF63748">
    <property type="entry name" value="Tudor/PWWP/MBT"/>
    <property type="match status" value="1"/>
</dbReference>
<dbReference type="SUPFAM" id="SSF53756">
    <property type="entry name" value="UDP-Glycosyltransferase/glycogen phosphorylase"/>
    <property type="match status" value="1"/>
</dbReference>
<dbReference type="PROSITE" id="PS50802">
    <property type="entry name" value="OTU"/>
    <property type="match status" value="1"/>
</dbReference>
<dbReference type="PROSITE" id="PS50304">
    <property type="entry name" value="TUDOR"/>
    <property type="match status" value="1"/>
</dbReference>
<sequence>MKCVFVTVGTTSFDDLIACVSAPDSLQKIESLGYNRLILQIGRGTVVPEPFSTESFTLDVYRYKDSLKEDIQKADLVISHAGAGSCLETLEKGKPLVVVINEKLMNNHQLELAKQLHKEGHLFYCTCRVLTCPGQAKSIASAPGKCQDSAALTSTAFSGLDFGLLSGYLHKQALVTATHPTCTLLFPSCHAFFPLPLTPTLYKMHKGWKNYCSQKSLNEASMDEYLGSLGLFRKLTAKDASCLFRAISEQLFCSQVHHLEIRKACVSYMRENQQTFESYVEGSFEKYLERLGDPKESAGQLEIRALSLIYNRDFILYRFPGKPPTYVTDNGYEDKILLCYSSSGHYDSVYSKQFQSSAAVCQAVLYEILYKDVFVVDEEELKTAIKLFRSGSKKNRNNAVTGSEDAHTDYKSSNQNRMEEWGACYNAENIPEGYNKGTEETKSPENPSKMPFPYKVLKALDPEIYRNVEFDVWLDSRKELQKSDYMEYAGRQYYLGDKCQVCLESEGRYYNAHIQEVGNENNSVTVFIEELAEKHVVPLANLKPVTQVMSVPAWNAMPSRKGRGYQKMPGGYVPEIVISEMDIKQQKKMFKKIRGKEVYMTMAYGKGDPLLPPRLQHSMHYGHDPPMHYSQTAGNVMSNEHFHPQHPSPRQGRGYGMPRNSSRFINRHNMPGPKVDFYPGPGKRCCQSYDNFSYRSRSFRRSHRQMSCVNKESQYGFTPGNGQMPRGLEETITFYEVEEGDETAYPTLPNHGGPSTMVPATSGYCVGRRGHSSGKQTLNLEEGNGQSENGRYHEEYLYRAEPDYETSGVYSTTASTANLSLQDRKSCSMSPQDTVTSYNYPQKMMGNIAAVAASCANNVPAPVLSNGAAANQAISTTSVSSQNAIQPLFVSPPTHGRPVIASPSYPCHSAIPHAGASLPPPPPPPPPPPPPPPPPPPPPPPPPPPALDVGETSNLQPPPPLPPPPYSCDPSGSDLPQDTKVLQYYFNLGLQCYYHSYWHSMVYVPQMQQQLHVENYPVYTEPPLVDQTVPQCYSEVRREDGIQAEASANDTFPNADSSSVPHGAVYYPVMSDPYGQPPLPGFDSCLPVVPDYSCVPPWHPVGTAYGGSSQIHGAINPGPIGCIAPSPPASHYVPQGM</sequence>